<accession>O06743</accession>
<accession>Q796Q0</accession>
<organism>
    <name type="scientific">Bacillus subtilis (strain 168)</name>
    <dbReference type="NCBI Taxonomy" id="224308"/>
    <lineage>
        <taxon>Bacteria</taxon>
        <taxon>Bacillati</taxon>
        <taxon>Bacillota</taxon>
        <taxon>Bacilli</taxon>
        <taxon>Bacillales</taxon>
        <taxon>Bacillaceae</taxon>
        <taxon>Bacillus</taxon>
    </lineage>
</organism>
<sequence length="282" mass="31067">MDVVDELIKLHEEHVSGLLRLCGQAGWPDYGEQELKLLVQQGRFFGYQNVSGDIISCIGLFLFGRLTSIGLVIVDKEYQRLGLGRRMVNACITQTDENTAIRLCATKEGLPLYEKAGFHTAGSVRKYSCHSFQPYTKKLDAELTSFREQDFHDLTAADLAAFGGDRSNLLQQLISASCECIIARNQDGQLIGYGLSVQTPANLKFGPIIAPSSDVAAQIITRLAAGKQGPMRIDIPSEHTSLHDSLIEMGFHKDDEPPILFYQKKAPIQNGHLYALISQALG</sequence>
<comment type="similarity">
    <text evidence="2">Belongs to the acetyltransferase family.</text>
</comment>
<gene>
    <name type="primary">yitH</name>
    <name type="ordered locus">BSU10990</name>
</gene>
<protein>
    <recommendedName>
        <fullName>Uncharacterized N-acetyltransferase YitH</fullName>
        <ecNumber>2.3.1.-</ecNumber>
    </recommendedName>
</protein>
<name>YITH_BACSU</name>
<proteinExistence type="inferred from homology"/>
<keyword id="KW-0012">Acyltransferase</keyword>
<keyword id="KW-1185">Reference proteome</keyword>
<keyword id="KW-0808">Transferase</keyword>
<feature type="chain" id="PRO_0000360493" description="Uncharacterized N-acetyltransferase YitH">
    <location>
        <begin position="1"/>
        <end position="282"/>
    </location>
</feature>
<feature type="domain" description="N-acetyltransferase" evidence="1">
    <location>
        <begin position="5"/>
        <end position="140"/>
    </location>
</feature>
<dbReference type="EC" id="2.3.1.-"/>
<dbReference type="EMBL" id="Y09476">
    <property type="protein sequence ID" value="CAA70663.1"/>
    <property type="molecule type" value="Genomic_DNA"/>
</dbReference>
<dbReference type="EMBL" id="AL009126">
    <property type="protein sequence ID" value="CAB12939.1"/>
    <property type="molecule type" value="Genomic_DNA"/>
</dbReference>
<dbReference type="PIR" id="A69840">
    <property type="entry name" value="A69840"/>
</dbReference>
<dbReference type="RefSeq" id="NP_388980.1">
    <property type="nucleotide sequence ID" value="NC_000964.3"/>
</dbReference>
<dbReference type="RefSeq" id="WP_003244917.1">
    <property type="nucleotide sequence ID" value="NZ_OZ025638.1"/>
</dbReference>
<dbReference type="SMR" id="O06743"/>
<dbReference type="FunCoup" id="O06743">
    <property type="interactions" value="5"/>
</dbReference>
<dbReference type="STRING" id="224308.BSU10990"/>
<dbReference type="PaxDb" id="224308-BSU10990"/>
<dbReference type="EnsemblBacteria" id="CAB12939">
    <property type="protein sequence ID" value="CAB12939"/>
    <property type="gene ID" value="BSU_10990"/>
</dbReference>
<dbReference type="GeneID" id="936361"/>
<dbReference type="KEGG" id="bsu:BSU10990"/>
<dbReference type="PATRIC" id="fig|224308.179.peg.1181"/>
<dbReference type="eggNOG" id="COG0454">
    <property type="taxonomic scope" value="Bacteria"/>
</dbReference>
<dbReference type="InParanoid" id="O06743"/>
<dbReference type="OrthoDB" id="8453373at2"/>
<dbReference type="PhylomeDB" id="O06743"/>
<dbReference type="BioCyc" id="BSUB:BSU10990-MONOMER"/>
<dbReference type="Proteomes" id="UP000001570">
    <property type="component" value="Chromosome"/>
</dbReference>
<dbReference type="GO" id="GO:0016747">
    <property type="term" value="F:acyltransferase activity, transferring groups other than amino-acyl groups"/>
    <property type="evidence" value="ECO:0007669"/>
    <property type="project" value="InterPro"/>
</dbReference>
<dbReference type="CDD" id="cd04301">
    <property type="entry name" value="NAT_SF"/>
    <property type="match status" value="1"/>
</dbReference>
<dbReference type="Gene3D" id="3.40.630.30">
    <property type="match status" value="1"/>
</dbReference>
<dbReference type="Gene3D" id="3.40.630.90">
    <property type="match status" value="1"/>
</dbReference>
<dbReference type="InterPro" id="IPR052729">
    <property type="entry name" value="Acyl/Acetyltrans_Enzymes"/>
</dbReference>
<dbReference type="InterPro" id="IPR016181">
    <property type="entry name" value="Acyl_CoA_acyltransferase"/>
</dbReference>
<dbReference type="InterPro" id="IPR000182">
    <property type="entry name" value="GNAT_dom"/>
</dbReference>
<dbReference type="InterPro" id="IPR041496">
    <property type="entry name" value="YitH/HolE_GNAT"/>
</dbReference>
<dbReference type="PANTHER" id="PTHR47237:SF2">
    <property type="entry name" value="BLL4206 PROTEIN"/>
    <property type="match status" value="1"/>
</dbReference>
<dbReference type="PANTHER" id="PTHR47237">
    <property type="entry name" value="SLL0310 PROTEIN"/>
    <property type="match status" value="1"/>
</dbReference>
<dbReference type="Pfam" id="PF13673">
    <property type="entry name" value="Acetyltransf_10"/>
    <property type="match status" value="1"/>
</dbReference>
<dbReference type="Pfam" id="PF18014">
    <property type="entry name" value="Acetyltransf_18"/>
    <property type="match status" value="1"/>
</dbReference>
<dbReference type="SUPFAM" id="SSF55729">
    <property type="entry name" value="Acyl-CoA N-acyltransferases (Nat)"/>
    <property type="match status" value="1"/>
</dbReference>
<dbReference type="PROSITE" id="PS51186">
    <property type="entry name" value="GNAT"/>
    <property type="match status" value="1"/>
</dbReference>
<reference key="1">
    <citation type="journal article" date="1997" name="Microbiology">
        <title>A Bacillus subtilis chromosome segment at the 100 degrees to 102 degrees position encoding 11 membrane proteins.</title>
        <authorList>
            <person name="Roche B."/>
            <person name="Autret S."/>
            <person name="Levine A."/>
            <person name="Vannier F."/>
            <person name="Medina N."/>
            <person name="Seror S.J."/>
        </authorList>
    </citation>
    <scope>NUCLEOTIDE SEQUENCE [GENOMIC DNA]</scope>
    <source>
        <strain>168</strain>
    </source>
</reference>
<reference key="2">
    <citation type="journal article" date="1997" name="Nature">
        <title>The complete genome sequence of the Gram-positive bacterium Bacillus subtilis.</title>
        <authorList>
            <person name="Kunst F."/>
            <person name="Ogasawara N."/>
            <person name="Moszer I."/>
            <person name="Albertini A.M."/>
            <person name="Alloni G."/>
            <person name="Azevedo V."/>
            <person name="Bertero M.G."/>
            <person name="Bessieres P."/>
            <person name="Bolotin A."/>
            <person name="Borchert S."/>
            <person name="Borriss R."/>
            <person name="Boursier L."/>
            <person name="Brans A."/>
            <person name="Braun M."/>
            <person name="Brignell S.C."/>
            <person name="Bron S."/>
            <person name="Brouillet S."/>
            <person name="Bruschi C.V."/>
            <person name="Caldwell B."/>
            <person name="Capuano V."/>
            <person name="Carter N.M."/>
            <person name="Choi S.-K."/>
            <person name="Codani J.-J."/>
            <person name="Connerton I.F."/>
            <person name="Cummings N.J."/>
            <person name="Daniel R.A."/>
            <person name="Denizot F."/>
            <person name="Devine K.M."/>
            <person name="Duesterhoeft A."/>
            <person name="Ehrlich S.D."/>
            <person name="Emmerson P.T."/>
            <person name="Entian K.-D."/>
            <person name="Errington J."/>
            <person name="Fabret C."/>
            <person name="Ferrari E."/>
            <person name="Foulger D."/>
            <person name="Fritz C."/>
            <person name="Fujita M."/>
            <person name="Fujita Y."/>
            <person name="Fuma S."/>
            <person name="Galizzi A."/>
            <person name="Galleron N."/>
            <person name="Ghim S.-Y."/>
            <person name="Glaser P."/>
            <person name="Goffeau A."/>
            <person name="Golightly E.J."/>
            <person name="Grandi G."/>
            <person name="Guiseppi G."/>
            <person name="Guy B.J."/>
            <person name="Haga K."/>
            <person name="Haiech J."/>
            <person name="Harwood C.R."/>
            <person name="Henaut A."/>
            <person name="Hilbert H."/>
            <person name="Holsappel S."/>
            <person name="Hosono S."/>
            <person name="Hullo M.-F."/>
            <person name="Itaya M."/>
            <person name="Jones L.-M."/>
            <person name="Joris B."/>
            <person name="Karamata D."/>
            <person name="Kasahara Y."/>
            <person name="Klaerr-Blanchard M."/>
            <person name="Klein C."/>
            <person name="Kobayashi Y."/>
            <person name="Koetter P."/>
            <person name="Koningstein G."/>
            <person name="Krogh S."/>
            <person name="Kumano M."/>
            <person name="Kurita K."/>
            <person name="Lapidus A."/>
            <person name="Lardinois S."/>
            <person name="Lauber J."/>
            <person name="Lazarevic V."/>
            <person name="Lee S.-M."/>
            <person name="Levine A."/>
            <person name="Liu H."/>
            <person name="Masuda S."/>
            <person name="Mauel C."/>
            <person name="Medigue C."/>
            <person name="Medina N."/>
            <person name="Mellado R.P."/>
            <person name="Mizuno M."/>
            <person name="Moestl D."/>
            <person name="Nakai S."/>
            <person name="Noback M."/>
            <person name="Noone D."/>
            <person name="O'Reilly M."/>
            <person name="Ogawa K."/>
            <person name="Ogiwara A."/>
            <person name="Oudega B."/>
            <person name="Park S.-H."/>
            <person name="Parro V."/>
            <person name="Pohl T.M."/>
            <person name="Portetelle D."/>
            <person name="Porwollik S."/>
            <person name="Prescott A.M."/>
            <person name="Presecan E."/>
            <person name="Pujic P."/>
            <person name="Purnelle B."/>
            <person name="Rapoport G."/>
            <person name="Rey M."/>
            <person name="Reynolds S."/>
            <person name="Rieger M."/>
            <person name="Rivolta C."/>
            <person name="Rocha E."/>
            <person name="Roche B."/>
            <person name="Rose M."/>
            <person name="Sadaie Y."/>
            <person name="Sato T."/>
            <person name="Scanlan E."/>
            <person name="Schleich S."/>
            <person name="Schroeter R."/>
            <person name="Scoffone F."/>
            <person name="Sekiguchi J."/>
            <person name="Sekowska A."/>
            <person name="Seror S.J."/>
            <person name="Serror P."/>
            <person name="Shin B.-S."/>
            <person name="Soldo B."/>
            <person name="Sorokin A."/>
            <person name="Tacconi E."/>
            <person name="Takagi T."/>
            <person name="Takahashi H."/>
            <person name="Takemaru K."/>
            <person name="Takeuchi M."/>
            <person name="Tamakoshi A."/>
            <person name="Tanaka T."/>
            <person name="Terpstra P."/>
            <person name="Tognoni A."/>
            <person name="Tosato V."/>
            <person name="Uchiyama S."/>
            <person name="Vandenbol M."/>
            <person name="Vannier F."/>
            <person name="Vassarotti A."/>
            <person name="Viari A."/>
            <person name="Wambutt R."/>
            <person name="Wedler E."/>
            <person name="Wedler H."/>
            <person name="Weitzenegger T."/>
            <person name="Winters P."/>
            <person name="Wipat A."/>
            <person name="Yamamoto H."/>
            <person name="Yamane K."/>
            <person name="Yasumoto K."/>
            <person name="Yata K."/>
            <person name="Yoshida K."/>
            <person name="Yoshikawa H.-F."/>
            <person name="Zumstein E."/>
            <person name="Yoshikawa H."/>
            <person name="Danchin A."/>
        </authorList>
    </citation>
    <scope>NUCLEOTIDE SEQUENCE [LARGE SCALE GENOMIC DNA]</scope>
    <source>
        <strain>168</strain>
    </source>
</reference>
<evidence type="ECO:0000255" key="1">
    <source>
        <dbReference type="PROSITE-ProRule" id="PRU00532"/>
    </source>
</evidence>
<evidence type="ECO:0000305" key="2"/>